<gene>
    <name evidence="1" type="primary">recO</name>
    <name type="ordered locus">PP_1435</name>
</gene>
<proteinExistence type="inferred from homology"/>
<evidence type="ECO:0000255" key="1">
    <source>
        <dbReference type="HAMAP-Rule" id="MF_00201"/>
    </source>
</evidence>
<name>RECO_PSEPK</name>
<feature type="chain" id="PRO_0000204983" description="DNA repair protein RecO">
    <location>
        <begin position="1"/>
        <end position="227"/>
    </location>
</feature>
<protein>
    <recommendedName>
        <fullName evidence="1">DNA repair protein RecO</fullName>
    </recommendedName>
    <alternativeName>
        <fullName evidence="1">Recombination protein O</fullName>
    </alternativeName>
</protein>
<accession>Q88MY3</accession>
<reference key="1">
    <citation type="journal article" date="2002" name="Environ. Microbiol.">
        <title>Complete genome sequence and comparative analysis of the metabolically versatile Pseudomonas putida KT2440.</title>
        <authorList>
            <person name="Nelson K.E."/>
            <person name="Weinel C."/>
            <person name="Paulsen I.T."/>
            <person name="Dodson R.J."/>
            <person name="Hilbert H."/>
            <person name="Martins dos Santos V.A.P."/>
            <person name="Fouts D.E."/>
            <person name="Gill S.R."/>
            <person name="Pop M."/>
            <person name="Holmes M."/>
            <person name="Brinkac L.M."/>
            <person name="Beanan M.J."/>
            <person name="DeBoy R.T."/>
            <person name="Daugherty S.C."/>
            <person name="Kolonay J.F."/>
            <person name="Madupu R."/>
            <person name="Nelson W.C."/>
            <person name="White O."/>
            <person name="Peterson J.D."/>
            <person name="Khouri H.M."/>
            <person name="Hance I."/>
            <person name="Chris Lee P."/>
            <person name="Holtzapple E.K."/>
            <person name="Scanlan D."/>
            <person name="Tran K."/>
            <person name="Moazzez A."/>
            <person name="Utterback T.R."/>
            <person name="Rizzo M."/>
            <person name="Lee K."/>
            <person name="Kosack D."/>
            <person name="Moestl D."/>
            <person name="Wedler H."/>
            <person name="Lauber J."/>
            <person name="Stjepandic D."/>
            <person name="Hoheisel J."/>
            <person name="Straetz M."/>
            <person name="Heim S."/>
            <person name="Kiewitz C."/>
            <person name="Eisen J.A."/>
            <person name="Timmis K.N."/>
            <person name="Duesterhoeft A."/>
            <person name="Tuemmler B."/>
            <person name="Fraser C.M."/>
        </authorList>
    </citation>
    <scope>NUCLEOTIDE SEQUENCE [LARGE SCALE GENOMIC DNA]</scope>
    <source>
        <strain>ATCC 47054 / DSM 6125 / CFBP 8728 / NCIMB 11950 / KT2440</strain>
    </source>
</reference>
<organism>
    <name type="scientific">Pseudomonas putida (strain ATCC 47054 / DSM 6125 / CFBP 8728 / NCIMB 11950 / KT2440)</name>
    <dbReference type="NCBI Taxonomy" id="160488"/>
    <lineage>
        <taxon>Bacteria</taxon>
        <taxon>Pseudomonadati</taxon>
        <taxon>Pseudomonadota</taxon>
        <taxon>Gammaproteobacteria</taxon>
        <taxon>Pseudomonadales</taxon>
        <taxon>Pseudomonadaceae</taxon>
        <taxon>Pseudomonas</taxon>
    </lineage>
</organism>
<dbReference type="EMBL" id="AE015451">
    <property type="protein sequence ID" value="AAN67057.1"/>
    <property type="molecule type" value="Genomic_DNA"/>
</dbReference>
<dbReference type="RefSeq" id="NP_743593.1">
    <property type="nucleotide sequence ID" value="NC_002947.4"/>
</dbReference>
<dbReference type="RefSeq" id="WP_010952537.1">
    <property type="nucleotide sequence ID" value="NZ_CP169744.1"/>
</dbReference>
<dbReference type="SMR" id="Q88MY3"/>
<dbReference type="STRING" id="160488.PP_1435"/>
<dbReference type="PaxDb" id="160488-PP_1435"/>
<dbReference type="GeneID" id="83682030"/>
<dbReference type="KEGG" id="ppu:PP_1435"/>
<dbReference type="PATRIC" id="fig|160488.4.peg.1523"/>
<dbReference type="eggNOG" id="COG1381">
    <property type="taxonomic scope" value="Bacteria"/>
</dbReference>
<dbReference type="HOGENOM" id="CLU_066645_1_0_6"/>
<dbReference type="OrthoDB" id="9804792at2"/>
<dbReference type="PhylomeDB" id="Q88MY3"/>
<dbReference type="BioCyc" id="PPUT160488:G1G01-1527-MONOMER"/>
<dbReference type="Proteomes" id="UP000000556">
    <property type="component" value="Chromosome"/>
</dbReference>
<dbReference type="GO" id="GO:0043590">
    <property type="term" value="C:bacterial nucleoid"/>
    <property type="evidence" value="ECO:0007669"/>
    <property type="project" value="TreeGrafter"/>
</dbReference>
<dbReference type="GO" id="GO:0006310">
    <property type="term" value="P:DNA recombination"/>
    <property type="evidence" value="ECO:0007669"/>
    <property type="project" value="UniProtKB-UniRule"/>
</dbReference>
<dbReference type="GO" id="GO:0006302">
    <property type="term" value="P:double-strand break repair"/>
    <property type="evidence" value="ECO:0007669"/>
    <property type="project" value="TreeGrafter"/>
</dbReference>
<dbReference type="Gene3D" id="2.40.50.140">
    <property type="entry name" value="Nucleic acid-binding proteins"/>
    <property type="match status" value="1"/>
</dbReference>
<dbReference type="Gene3D" id="1.20.1440.120">
    <property type="entry name" value="Recombination protein O, C-terminal domain"/>
    <property type="match status" value="1"/>
</dbReference>
<dbReference type="HAMAP" id="MF_00201">
    <property type="entry name" value="RecO"/>
    <property type="match status" value="1"/>
</dbReference>
<dbReference type="InterPro" id="IPR037278">
    <property type="entry name" value="ARFGAP/RecO"/>
</dbReference>
<dbReference type="InterPro" id="IPR022572">
    <property type="entry name" value="DNA_rep/recomb_RecO_N"/>
</dbReference>
<dbReference type="InterPro" id="IPR012340">
    <property type="entry name" value="NA-bd_OB-fold"/>
</dbReference>
<dbReference type="InterPro" id="IPR003717">
    <property type="entry name" value="RecO"/>
</dbReference>
<dbReference type="InterPro" id="IPR042242">
    <property type="entry name" value="RecO_C"/>
</dbReference>
<dbReference type="NCBIfam" id="TIGR00613">
    <property type="entry name" value="reco"/>
    <property type="match status" value="1"/>
</dbReference>
<dbReference type="PANTHER" id="PTHR33991">
    <property type="entry name" value="DNA REPAIR PROTEIN RECO"/>
    <property type="match status" value="1"/>
</dbReference>
<dbReference type="PANTHER" id="PTHR33991:SF1">
    <property type="entry name" value="DNA REPAIR PROTEIN RECO"/>
    <property type="match status" value="1"/>
</dbReference>
<dbReference type="Pfam" id="PF02565">
    <property type="entry name" value="RecO_C"/>
    <property type="match status" value="1"/>
</dbReference>
<dbReference type="Pfam" id="PF11967">
    <property type="entry name" value="RecO_N"/>
    <property type="match status" value="1"/>
</dbReference>
<dbReference type="SUPFAM" id="SSF57863">
    <property type="entry name" value="ArfGap/RecO-like zinc finger"/>
    <property type="match status" value="1"/>
</dbReference>
<dbReference type="SUPFAM" id="SSF50249">
    <property type="entry name" value="Nucleic acid-binding proteins"/>
    <property type="match status" value="1"/>
</dbReference>
<sequence length="227" mass="25447">MEQPVGQPAYVLHSRAYKETSALVDFFTPQGRMRAVLRRARSKGGSLVRPFVSLEVELRGRGELKNVSRMDSTGIAAWLHGDALFSGLYLNELLMRLLPAEAPFPTIFEHYTLTLQALAEGRPLEPLLRSFEWRLLDELGYAFSLNQDVNDQPIAADGLYRLRVDAGLERVELLQPGLFRGIELLALAEADWDAPGALLAAKRLMRQALAVHLGAKPLVSRELFRKR</sequence>
<keyword id="KW-0227">DNA damage</keyword>
<keyword id="KW-0233">DNA recombination</keyword>
<keyword id="KW-0234">DNA repair</keyword>
<keyword id="KW-1185">Reference proteome</keyword>
<comment type="function">
    <text evidence="1">Involved in DNA repair and RecF pathway recombination.</text>
</comment>
<comment type="similarity">
    <text evidence="1">Belongs to the RecO family.</text>
</comment>